<accession>Q32JJ2</accession>
<proteinExistence type="inferred from homology"/>
<sequence length="432" mass="48165">MQVSVETTQGLGRRVTITIAADSIETAVKSELVNVAKKVRIDGFRKGKVPMNIVAQRYGASVRQDVLGDLMSRNFIDAIIKEKINPAGAPTYVPGEYKLGEDFTYSVEFEVYPEVELQGLEAIEVEKPIVEVTDADVDGMLDTLRKQQATWKEKDGAVEAEDRVTIDFTGSVDGEEFEGGKASDFVLAMGQGRMIPGFEDGIKGHKAGEEFTIDVTFPEEYHAENLKGKAAKFAINLKKVEERELPELTAEFIKRFGVEDGSVEGLRAEVRKNMERELKSAIRNRVKSQAIEGLVKANDIDVPAALIDSEIDVLRRQAAQRFGGNEKQALELPRELFEEQAKRRVVVGLLLGEVIRTNELKADEERVKGLIEEMASAYEDPKEVIEFYSKNKELMDNMRNVALEEQAAEAVLAKAKVTEKETTFNELMNQQA</sequence>
<gene>
    <name evidence="1" type="primary">tig</name>
    <name type="ordered locus">SDY_0296</name>
</gene>
<keyword id="KW-0131">Cell cycle</keyword>
<keyword id="KW-0132">Cell division</keyword>
<keyword id="KW-0143">Chaperone</keyword>
<keyword id="KW-0963">Cytoplasm</keyword>
<keyword id="KW-0413">Isomerase</keyword>
<keyword id="KW-1185">Reference proteome</keyword>
<keyword id="KW-0697">Rotamase</keyword>
<organism>
    <name type="scientific">Shigella dysenteriae serotype 1 (strain Sd197)</name>
    <dbReference type="NCBI Taxonomy" id="300267"/>
    <lineage>
        <taxon>Bacteria</taxon>
        <taxon>Pseudomonadati</taxon>
        <taxon>Pseudomonadota</taxon>
        <taxon>Gammaproteobacteria</taxon>
        <taxon>Enterobacterales</taxon>
        <taxon>Enterobacteriaceae</taxon>
        <taxon>Shigella</taxon>
    </lineage>
</organism>
<comment type="function">
    <text evidence="1">Involved in protein export. Acts as a chaperone by maintaining the newly synthesized protein in an open conformation. Functions as a peptidyl-prolyl cis-trans isomerase.</text>
</comment>
<comment type="catalytic activity">
    <reaction evidence="1">
        <text>[protein]-peptidylproline (omega=180) = [protein]-peptidylproline (omega=0)</text>
        <dbReference type="Rhea" id="RHEA:16237"/>
        <dbReference type="Rhea" id="RHEA-COMP:10747"/>
        <dbReference type="Rhea" id="RHEA-COMP:10748"/>
        <dbReference type="ChEBI" id="CHEBI:83833"/>
        <dbReference type="ChEBI" id="CHEBI:83834"/>
        <dbReference type="EC" id="5.2.1.8"/>
    </reaction>
</comment>
<comment type="subunit">
    <text evidence="1">Homodimer and monomer. In vivo most of the ribosomes are in complex with monomeric TF. Uncomplexed TF, however, is in a monomer-dimer equilibrium with approximately two thirds of TF existing in a dimeric state.</text>
</comment>
<comment type="subcellular location">
    <subcellularLocation>
        <location>Cytoplasm</location>
    </subcellularLocation>
    <text evidence="1">About half TF is bound to the ribosome near the polypeptide exit tunnel while the other half is free in the cytoplasm.</text>
</comment>
<comment type="domain">
    <text evidence="1">Consists of 3 domains; the N-terminus binds the ribosome, the middle domain has PPIase activity, while the C-terminus has intrinsic chaperone activity on its own.</text>
</comment>
<comment type="similarity">
    <text evidence="1">Belongs to the FKBP-type PPIase family. Tig subfamily.</text>
</comment>
<protein>
    <recommendedName>
        <fullName evidence="1">Trigger factor</fullName>
        <shortName evidence="1">TF</shortName>
        <ecNumber evidence="1">5.2.1.8</ecNumber>
    </recommendedName>
    <alternativeName>
        <fullName evidence="1">PPIase</fullName>
    </alternativeName>
</protein>
<dbReference type="EC" id="5.2.1.8" evidence="1"/>
<dbReference type="EMBL" id="CP000034">
    <property type="protein sequence ID" value="ABB60515.1"/>
    <property type="molecule type" value="Genomic_DNA"/>
</dbReference>
<dbReference type="RefSeq" id="WP_001198384.1">
    <property type="nucleotide sequence ID" value="NC_007606.1"/>
</dbReference>
<dbReference type="RefSeq" id="YP_402004.1">
    <property type="nucleotide sequence ID" value="NC_007606.1"/>
</dbReference>
<dbReference type="SMR" id="Q32JJ2"/>
<dbReference type="STRING" id="300267.SDY_0296"/>
<dbReference type="EnsemblBacteria" id="ABB60515">
    <property type="protein sequence ID" value="ABB60515"/>
    <property type="gene ID" value="SDY_0296"/>
</dbReference>
<dbReference type="KEGG" id="sdy:SDY_0296"/>
<dbReference type="PATRIC" id="fig|300267.13.peg.341"/>
<dbReference type="HOGENOM" id="CLU_033058_2_0_6"/>
<dbReference type="Proteomes" id="UP000002716">
    <property type="component" value="Chromosome"/>
</dbReference>
<dbReference type="GO" id="GO:0005737">
    <property type="term" value="C:cytoplasm"/>
    <property type="evidence" value="ECO:0007669"/>
    <property type="project" value="UniProtKB-SubCell"/>
</dbReference>
<dbReference type="GO" id="GO:0003755">
    <property type="term" value="F:peptidyl-prolyl cis-trans isomerase activity"/>
    <property type="evidence" value="ECO:0007669"/>
    <property type="project" value="UniProtKB-UniRule"/>
</dbReference>
<dbReference type="GO" id="GO:0044183">
    <property type="term" value="F:protein folding chaperone"/>
    <property type="evidence" value="ECO:0007669"/>
    <property type="project" value="TreeGrafter"/>
</dbReference>
<dbReference type="GO" id="GO:0043022">
    <property type="term" value="F:ribosome binding"/>
    <property type="evidence" value="ECO:0007669"/>
    <property type="project" value="TreeGrafter"/>
</dbReference>
<dbReference type="GO" id="GO:0051083">
    <property type="term" value="P:'de novo' cotranslational protein folding"/>
    <property type="evidence" value="ECO:0007669"/>
    <property type="project" value="TreeGrafter"/>
</dbReference>
<dbReference type="GO" id="GO:0051301">
    <property type="term" value="P:cell division"/>
    <property type="evidence" value="ECO:0007669"/>
    <property type="project" value="UniProtKB-KW"/>
</dbReference>
<dbReference type="GO" id="GO:0061077">
    <property type="term" value="P:chaperone-mediated protein folding"/>
    <property type="evidence" value="ECO:0007669"/>
    <property type="project" value="TreeGrafter"/>
</dbReference>
<dbReference type="GO" id="GO:0015031">
    <property type="term" value="P:protein transport"/>
    <property type="evidence" value="ECO:0007669"/>
    <property type="project" value="UniProtKB-UniRule"/>
</dbReference>
<dbReference type="GO" id="GO:0043335">
    <property type="term" value="P:protein unfolding"/>
    <property type="evidence" value="ECO:0007669"/>
    <property type="project" value="TreeGrafter"/>
</dbReference>
<dbReference type="FunFam" id="1.10.3120.10:FF:000001">
    <property type="entry name" value="Trigger factor"/>
    <property type="match status" value="1"/>
</dbReference>
<dbReference type="FunFam" id="3.10.50.40:FF:000001">
    <property type="entry name" value="Trigger factor"/>
    <property type="match status" value="1"/>
</dbReference>
<dbReference type="FunFam" id="3.30.70.1050:FF:000001">
    <property type="entry name" value="Trigger factor"/>
    <property type="match status" value="1"/>
</dbReference>
<dbReference type="Gene3D" id="3.10.50.40">
    <property type="match status" value="1"/>
</dbReference>
<dbReference type="Gene3D" id="3.30.70.1050">
    <property type="entry name" value="Trigger factor ribosome-binding domain"/>
    <property type="match status" value="1"/>
</dbReference>
<dbReference type="Gene3D" id="1.10.3120.10">
    <property type="entry name" value="Trigger factor, C-terminal domain"/>
    <property type="match status" value="1"/>
</dbReference>
<dbReference type="HAMAP" id="MF_00303">
    <property type="entry name" value="Trigger_factor_Tig"/>
    <property type="match status" value="1"/>
</dbReference>
<dbReference type="InterPro" id="IPR046357">
    <property type="entry name" value="PPIase_dom_sf"/>
</dbReference>
<dbReference type="InterPro" id="IPR001179">
    <property type="entry name" value="PPIase_FKBP_dom"/>
</dbReference>
<dbReference type="InterPro" id="IPR005215">
    <property type="entry name" value="Trig_fac"/>
</dbReference>
<dbReference type="InterPro" id="IPR008880">
    <property type="entry name" value="Trigger_fac_C"/>
</dbReference>
<dbReference type="InterPro" id="IPR037041">
    <property type="entry name" value="Trigger_fac_C_sf"/>
</dbReference>
<dbReference type="InterPro" id="IPR008881">
    <property type="entry name" value="Trigger_fac_ribosome-bd_bac"/>
</dbReference>
<dbReference type="InterPro" id="IPR036611">
    <property type="entry name" value="Trigger_fac_ribosome-bd_sf"/>
</dbReference>
<dbReference type="InterPro" id="IPR027304">
    <property type="entry name" value="Trigger_fact/SurA_dom_sf"/>
</dbReference>
<dbReference type="NCBIfam" id="TIGR00115">
    <property type="entry name" value="tig"/>
    <property type="match status" value="1"/>
</dbReference>
<dbReference type="PANTHER" id="PTHR30560">
    <property type="entry name" value="TRIGGER FACTOR CHAPERONE AND PEPTIDYL-PROLYL CIS/TRANS ISOMERASE"/>
    <property type="match status" value="1"/>
</dbReference>
<dbReference type="PANTHER" id="PTHR30560:SF3">
    <property type="entry name" value="TRIGGER FACTOR-LIKE PROTEIN TIG, CHLOROPLASTIC"/>
    <property type="match status" value="1"/>
</dbReference>
<dbReference type="Pfam" id="PF00254">
    <property type="entry name" value="FKBP_C"/>
    <property type="match status" value="1"/>
</dbReference>
<dbReference type="Pfam" id="PF05698">
    <property type="entry name" value="Trigger_C"/>
    <property type="match status" value="1"/>
</dbReference>
<dbReference type="Pfam" id="PF05697">
    <property type="entry name" value="Trigger_N"/>
    <property type="match status" value="1"/>
</dbReference>
<dbReference type="PIRSF" id="PIRSF003095">
    <property type="entry name" value="Trigger_factor"/>
    <property type="match status" value="1"/>
</dbReference>
<dbReference type="SUPFAM" id="SSF54534">
    <property type="entry name" value="FKBP-like"/>
    <property type="match status" value="1"/>
</dbReference>
<dbReference type="SUPFAM" id="SSF109998">
    <property type="entry name" value="Triger factor/SurA peptide-binding domain-like"/>
    <property type="match status" value="1"/>
</dbReference>
<dbReference type="SUPFAM" id="SSF102735">
    <property type="entry name" value="Trigger factor ribosome-binding domain"/>
    <property type="match status" value="1"/>
</dbReference>
<dbReference type="PROSITE" id="PS50059">
    <property type="entry name" value="FKBP_PPIASE"/>
    <property type="match status" value="1"/>
</dbReference>
<feature type="chain" id="PRO_0000256616" description="Trigger factor">
    <location>
        <begin position="1"/>
        <end position="432"/>
    </location>
</feature>
<feature type="domain" description="PPIase FKBP-type" evidence="1">
    <location>
        <begin position="161"/>
        <end position="246"/>
    </location>
</feature>
<evidence type="ECO:0000255" key="1">
    <source>
        <dbReference type="HAMAP-Rule" id="MF_00303"/>
    </source>
</evidence>
<reference key="1">
    <citation type="journal article" date="2005" name="Nucleic Acids Res.">
        <title>Genome dynamics and diversity of Shigella species, the etiologic agents of bacillary dysentery.</title>
        <authorList>
            <person name="Yang F."/>
            <person name="Yang J."/>
            <person name="Zhang X."/>
            <person name="Chen L."/>
            <person name="Jiang Y."/>
            <person name="Yan Y."/>
            <person name="Tang X."/>
            <person name="Wang J."/>
            <person name="Xiong Z."/>
            <person name="Dong J."/>
            <person name="Xue Y."/>
            <person name="Zhu Y."/>
            <person name="Xu X."/>
            <person name="Sun L."/>
            <person name="Chen S."/>
            <person name="Nie H."/>
            <person name="Peng J."/>
            <person name="Xu J."/>
            <person name="Wang Y."/>
            <person name="Yuan Z."/>
            <person name="Wen Y."/>
            <person name="Yao Z."/>
            <person name="Shen Y."/>
            <person name="Qiang B."/>
            <person name="Hou Y."/>
            <person name="Yu J."/>
            <person name="Jin Q."/>
        </authorList>
    </citation>
    <scope>NUCLEOTIDE SEQUENCE [LARGE SCALE GENOMIC DNA]</scope>
    <source>
        <strain>Sd197</strain>
    </source>
</reference>
<name>TIG_SHIDS</name>